<gene>
    <name type="primary">tmem263-b</name>
</gene>
<dbReference type="EMBL" id="BC084921">
    <property type="protein sequence ID" value="AAH84921.1"/>
    <property type="molecule type" value="mRNA"/>
</dbReference>
<dbReference type="RefSeq" id="NP_001088539.1">
    <property type="nucleotide sequence ID" value="NM_001095070.1"/>
</dbReference>
<dbReference type="DNASU" id="495413"/>
<dbReference type="GeneID" id="495413"/>
<dbReference type="KEGG" id="xla:495413"/>
<dbReference type="AGR" id="Xenbase:XB-GENE-17338626"/>
<dbReference type="CTD" id="495413"/>
<dbReference type="Xenbase" id="XB-GENE-17338626">
    <property type="gene designation" value="tmem263.S"/>
</dbReference>
<dbReference type="OrthoDB" id="6140834at2759"/>
<dbReference type="Proteomes" id="UP000186698">
    <property type="component" value="Chromosome 3S"/>
</dbReference>
<dbReference type="Bgee" id="495413">
    <property type="expression patterns" value="Expressed in liver and 19 other cell types or tissues"/>
</dbReference>
<dbReference type="GO" id="GO:0016020">
    <property type="term" value="C:membrane"/>
    <property type="evidence" value="ECO:0007669"/>
    <property type="project" value="UniProtKB-SubCell"/>
</dbReference>
<dbReference type="InterPro" id="IPR028153">
    <property type="entry name" value="UPF0444"/>
</dbReference>
<dbReference type="PANTHER" id="PTHR31443">
    <property type="match status" value="1"/>
</dbReference>
<dbReference type="Pfam" id="PF15475">
    <property type="entry name" value="UPF0444"/>
    <property type="match status" value="1"/>
</dbReference>
<accession>Q5U4X2</accession>
<sequence length="114" mass="11454">MSETEKIEEAAPPYLCEEPPEGAVKDHPQQQPGMISRVTGGIFSLTRGAVGATIGGVAWIGGKSFEVTKTAVTSVPSIGVGIVKGGVSVVTGSVAAVGSAVSNKVSGKKKDKSD</sequence>
<evidence type="ECO:0000250" key="1">
    <source>
        <dbReference type="UniProtKB" id="Q8WUH6"/>
    </source>
</evidence>
<evidence type="ECO:0000255" key="2"/>
<evidence type="ECO:0000256" key="3">
    <source>
        <dbReference type="SAM" id="MobiDB-lite"/>
    </source>
</evidence>
<evidence type="ECO:0000305" key="4"/>
<name>T263B_XENLA</name>
<protein>
    <recommendedName>
        <fullName>Transmembrane protein 263-B</fullName>
    </recommendedName>
</protein>
<reference key="1">
    <citation type="submission" date="2004-10" db="EMBL/GenBank/DDBJ databases">
        <authorList>
            <consortium name="NIH - Xenopus Gene Collection (XGC) project"/>
        </authorList>
    </citation>
    <scope>NUCLEOTIDE SEQUENCE [LARGE SCALE MRNA]</scope>
    <source>
        <tissue>Ovary</tissue>
    </source>
</reference>
<proteinExistence type="inferred from homology"/>
<feature type="chain" id="PRO_0000263633" description="Transmembrane protein 263-B">
    <location>
        <begin position="1"/>
        <end position="114"/>
    </location>
</feature>
<feature type="transmembrane region" description="Helical" evidence="2">
    <location>
        <begin position="40"/>
        <end position="60"/>
    </location>
</feature>
<feature type="transmembrane region" description="Helical" evidence="2">
    <location>
        <begin position="78"/>
        <end position="98"/>
    </location>
</feature>
<feature type="region of interest" description="Disordered" evidence="3">
    <location>
        <begin position="1"/>
        <end position="33"/>
    </location>
</feature>
<comment type="function">
    <text evidence="1">May play a role in bone development.</text>
</comment>
<comment type="subcellular location">
    <subcellularLocation>
        <location evidence="4">Membrane</location>
        <topology evidence="2">Multi-pass membrane protein</topology>
    </subcellularLocation>
</comment>
<comment type="similarity">
    <text evidence="4">Belongs to the TMEM263 family.</text>
</comment>
<keyword id="KW-0472">Membrane</keyword>
<keyword id="KW-1185">Reference proteome</keyword>
<keyword id="KW-0812">Transmembrane</keyword>
<keyword id="KW-1133">Transmembrane helix</keyword>
<organism>
    <name type="scientific">Xenopus laevis</name>
    <name type="common">African clawed frog</name>
    <dbReference type="NCBI Taxonomy" id="8355"/>
    <lineage>
        <taxon>Eukaryota</taxon>
        <taxon>Metazoa</taxon>
        <taxon>Chordata</taxon>
        <taxon>Craniata</taxon>
        <taxon>Vertebrata</taxon>
        <taxon>Euteleostomi</taxon>
        <taxon>Amphibia</taxon>
        <taxon>Batrachia</taxon>
        <taxon>Anura</taxon>
        <taxon>Pipoidea</taxon>
        <taxon>Pipidae</taxon>
        <taxon>Xenopodinae</taxon>
        <taxon>Xenopus</taxon>
        <taxon>Xenopus</taxon>
    </lineage>
</organism>